<comment type="catalytic activity">
    <reaction evidence="1">
        <text>(S)-malate + NAD(+) = pyruvate + CO2 + NADH</text>
        <dbReference type="Rhea" id="RHEA:12653"/>
        <dbReference type="ChEBI" id="CHEBI:15361"/>
        <dbReference type="ChEBI" id="CHEBI:15589"/>
        <dbReference type="ChEBI" id="CHEBI:16526"/>
        <dbReference type="ChEBI" id="CHEBI:57540"/>
        <dbReference type="ChEBI" id="CHEBI:57945"/>
        <dbReference type="EC" id="1.1.1.38"/>
    </reaction>
</comment>
<comment type="catalytic activity">
    <reaction evidence="1">
        <text>oxaloacetate + H(+) = pyruvate + CO2</text>
        <dbReference type="Rhea" id="RHEA:15641"/>
        <dbReference type="ChEBI" id="CHEBI:15361"/>
        <dbReference type="ChEBI" id="CHEBI:15378"/>
        <dbReference type="ChEBI" id="CHEBI:16452"/>
        <dbReference type="ChEBI" id="CHEBI:16526"/>
        <dbReference type="EC" id="1.1.1.38"/>
    </reaction>
</comment>
<comment type="cofactor">
    <cofactor evidence="1">
        <name>Mg(2+)</name>
        <dbReference type="ChEBI" id="CHEBI:18420"/>
    </cofactor>
    <cofactor evidence="1">
        <name>Mn(2+)</name>
        <dbReference type="ChEBI" id="CHEBI:29035"/>
    </cofactor>
    <text evidence="1">Divalent metal cations. Prefers magnesium or manganese.</text>
</comment>
<comment type="subunit">
    <text evidence="1">Homotetramer.</text>
</comment>
<comment type="similarity">
    <text evidence="1">Belongs to the malic enzymes family.</text>
</comment>
<proteinExistence type="inferred from homology"/>
<gene>
    <name evidence="1" type="primary">maeA</name>
    <name type="ordered locus">ECP_1481</name>
</gene>
<reference key="1">
    <citation type="journal article" date="2006" name="Mol. Microbiol.">
        <title>Role of pathogenicity island-associated integrases in the genome plasticity of uropathogenic Escherichia coli strain 536.</title>
        <authorList>
            <person name="Hochhut B."/>
            <person name="Wilde C."/>
            <person name="Balling G."/>
            <person name="Middendorf B."/>
            <person name="Dobrindt U."/>
            <person name="Brzuszkiewicz E."/>
            <person name="Gottschalk G."/>
            <person name="Carniel E."/>
            <person name="Hacker J."/>
        </authorList>
    </citation>
    <scope>NUCLEOTIDE SEQUENCE [LARGE SCALE GENOMIC DNA]</scope>
    <source>
        <strain>536 / UPEC</strain>
    </source>
</reference>
<evidence type="ECO:0000255" key="1">
    <source>
        <dbReference type="HAMAP-Rule" id="MF_01619"/>
    </source>
</evidence>
<accession>Q0THU1</accession>
<protein>
    <recommendedName>
        <fullName evidence="1">NAD-dependent malic enzyme</fullName>
        <shortName evidence="1">NAD-ME</shortName>
        <ecNumber evidence="1">1.1.1.38</ecNumber>
    </recommendedName>
</protein>
<keyword id="KW-0479">Metal-binding</keyword>
<keyword id="KW-0520">NAD</keyword>
<keyword id="KW-0560">Oxidoreductase</keyword>
<feature type="chain" id="PRO_1000069530" description="NAD-dependent malic enzyme">
    <location>
        <begin position="1"/>
        <end position="565"/>
    </location>
</feature>
<feature type="active site" description="Proton donor" evidence="1">
    <location>
        <position position="104"/>
    </location>
</feature>
<feature type="active site" description="Proton acceptor" evidence="1">
    <location>
        <position position="175"/>
    </location>
</feature>
<feature type="binding site" evidence="1">
    <location>
        <position position="157"/>
    </location>
    <ligand>
        <name>NAD(+)</name>
        <dbReference type="ChEBI" id="CHEBI:57540"/>
    </ligand>
</feature>
<feature type="binding site" evidence="1">
    <location>
        <position position="246"/>
    </location>
    <ligand>
        <name>a divalent metal cation</name>
        <dbReference type="ChEBI" id="CHEBI:60240"/>
    </ligand>
</feature>
<feature type="binding site" evidence="1">
    <location>
        <position position="247"/>
    </location>
    <ligand>
        <name>a divalent metal cation</name>
        <dbReference type="ChEBI" id="CHEBI:60240"/>
    </ligand>
</feature>
<feature type="binding site" evidence="1">
    <location>
        <position position="270"/>
    </location>
    <ligand>
        <name>a divalent metal cation</name>
        <dbReference type="ChEBI" id="CHEBI:60240"/>
    </ligand>
</feature>
<feature type="binding site" evidence="1">
    <location>
        <position position="270"/>
    </location>
    <ligand>
        <name>NAD(+)</name>
        <dbReference type="ChEBI" id="CHEBI:57540"/>
    </ligand>
</feature>
<feature type="binding site" evidence="1">
    <location>
        <position position="418"/>
    </location>
    <ligand>
        <name>NAD(+)</name>
        <dbReference type="ChEBI" id="CHEBI:57540"/>
    </ligand>
</feature>
<feature type="site" description="Important for activity" evidence="1">
    <location>
        <position position="270"/>
    </location>
</feature>
<organism>
    <name type="scientific">Escherichia coli O6:K15:H31 (strain 536 / UPEC)</name>
    <dbReference type="NCBI Taxonomy" id="362663"/>
    <lineage>
        <taxon>Bacteria</taxon>
        <taxon>Pseudomonadati</taxon>
        <taxon>Pseudomonadota</taxon>
        <taxon>Gammaproteobacteria</taxon>
        <taxon>Enterobacterales</taxon>
        <taxon>Enterobacteriaceae</taxon>
        <taxon>Escherichia</taxon>
    </lineage>
</organism>
<sequence length="565" mass="63172">MEPKTKKQRSLYIPYAGPVLLEFPLLNKGSAFSMEERRNFNLLGLLPEVVETIEEQAERAWIQYQGFKTEIDKHIYLRNIQDTNETLFYRLVNNHLDEMMPVIYTPTVGAACERFSEIYRRSRGVFISYQNRHNMDDILQNVPNHNIKVIVVTDGERILGLGDQGIGGMGIPIGKLSLYTACGGISPAYTLPVVLDVGTNNQQLLNDPLYMGWRNPRITDDEYYEFVDEFIQAVKQRWPDVLLQFEDFAQKNAMPLLNRYRNEICSFNDDIQGTAAVTVGTLIAASRAAGGQLSEKKIVFLGAGSAGCGIAEMIIAQTQREGLSEEAARQKVFMVDRFGLLTDKMPNLLPFQTKLVQKRENLSDWDTDSDVLSLLDVVRNVKPDILIGVSGQTGLFTEEIIREMHKHCPRPIVMPLSNPTSRVEATPQDIIAWTEGNALVATGSPFNPVVWKDKIYPIAQCNNAFIFPGIGLGVIASGASRITDEMLMSASETLAQYSPLVLNGEGLVLPELKDIQKVSRAIAFAVGKMAQQQGVAVKTSAEALQQAIDDNFWHAEYRDYRRTSI</sequence>
<dbReference type="EC" id="1.1.1.38" evidence="1"/>
<dbReference type="EMBL" id="CP000247">
    <property type="protein sequence ID" value="ABG69488.1"/>
    <property type="molecule type" value="Genomic_DNA"/>
</dbReference>
<dbReference type="RefSeq" id="WP_000433462.1">
    <property type="nucleotide sequence ID" value="NC_008253.1"/>
</dbReference>
<dbReference type="SMR" id="Q0THU1"/>
<dbReference type="KEGG" id="ecp:ECP_1481"/>
<dbReference type="HOGENOM" id="CLU_011405_5_2_6"/>
<dbReference type="Proteomes" id="UP000009182">
    <property type="component" value="Chromosome"/>
</dbReference>
<dbReference type="GO" id="GO:0005829">
    <property type="term" value="C:cytosol"/>
    <property type="evidence" value="ECO:0007669"/>
    <property type="project" value="TreeGrafter"/>
</dbReference>
<dbReference type="GO" id="GO:0004471">
    <property type="term" value="F:malate dehydrogenase (decarboxylating) (NAD+) activity"/>
    <property type="evidence" value="ECO:0007669"/>
    <property type="project" value="UniProtKB-UniRule"/>
</dbReference>
<dbReference type="GO" id="GO:0046872">
    <property type="term" value="F:metal ion binding"/>
    <property type="evidence" value="ECO:0007669"/>
    <property type="project" value="UniProtKB-KW"/>
</dbReference>
<dbReference type="GO" id="GO:0051287">
    <property type="term" value="F:NAD binding"/>
    <property type="evidence" value="ECO:0007669"/>
    <property type="project" value="InterPro"/>
</dbReference>
<dbReference type="GO" id="GO:0008948">
    <property type="term" value="F:oxaloacetate decarboxylase activity"/>
    <property type="evidence" value="ECO:0007669"/>
    <property type="project" value="UniProtKB-UniRule"/>
</dbReference>
<dbReference type="GO" id="GO:0006108">
    <property type="term" value="P:malate metabolic process"/>
    <property type="evidence" value="ECO:0007669"/>
    <property type="project" value="TreeGrafter"/>
</dbReference>
<dbReference type="CDD" id="cd05312">
    <property type="entry name" value="NAD_bind_1_malic_enz"/>
    <property type="match status" value="1"/>
</dbReference>
<dbReference type="FunFam" id="3.40.50.10380:FF:000001">
    <property type="entry name" value="NAD-dependent malic enzyme"/>
    <property type="match status" value="1"/>
</dbReference>
<dbReference type="FunFam" id="3.40.50.720:FF:000055">
    <property type="entry name" value="NAD-dependent malic enzyme"/>
    <property type="match status" value="1"/>
</dbReference>
<dbReference type="Gene3D" id="3.40.50.10380">
    <property type="entry name" value="Malic enzyme, N-terminal domain"/>
    <property type="match status" value="1"/>
</dbReference>
<dbReference type="Gene3D" id="3.40.50.720">
    <property type="entry name" value="NAD(P)-binding Rossmann-like Domain"/>
    <property type="match status" value="1"/>
</dbReference>
<dbReference type="HAMAP" id="MF_01619">
    <property type="entry name" value="NAD_malic_enz"/>
    <property type="match status" value="1"/>
</dbReference>
<dbReference type="InterPro" id="IPR046346">
    <property type="entry name" value="Aminoacid_DH-like_N_sf"/>
</dbReference>
<dbReference type="InterPro" id="IPR015884">
    <property type="entry name" value="Malic_enzyme_CS"/>
</dbReference>
<dbReference type="InterPro" id="IPR012301">
    <property type="entry name" value="Malic_N_dom"/>
</dbReference>
<dbReference type="InterPro" id="IPR037062">
    <property type="entry name" value="Malic_N_dom_sf"/>
</dbReference>
<dbReference type="InterPro" id="IPR012302">
    <property type="entry name" value="Malic_NAD-bd"/>
</dbReference>
<dbReference type="InterPro" id="IPR001891">
    <property type="entry name" value="Malic_OxRdtase"/>
</dbReference>
<dbReference type="InterPro" id="IPR036291">
    <property type="entry name" value="NAD(P)-bd_dom_sf"/>
</dbReference>
<dbReference type="InterPro" id="IPR023667">
    <property type="entry name" value="NAD_malic_enz_proteobac"/>
</dbReference>
<dbReference type="NCBIfam" id="NF010052">
    <property type="entry name" value="PRK13529.1"/>
    <property type="match status" value="1"/>
</dbReference>
<dbReference type="PANTHER" id="PTHR23406">
    <property type="entry name" value="MALIC ENZYME-RELATED"/>
    <property type="match status" value="1"/>
</dbReference>
<dbReference type="PANTHER" id="PTHR23406:SF34">
    <property type="entry name" value="NAD-DEPENDENT MALIC ENZYME, MITOCHONDRIAL"/>
    <property type="match status" value="1"/>
</dbReference>
<dbReference type="Pfam" id="PF00390">
    <property type="entry name" value="malic"/>
    <property type="match status" value="1"/>
</dbReference>
<dbReference type="Pfam" id="PF03949">
    <property type="entry name" value="Malic_M"/>
    <property type="match status" value="1"/>
</dbReference>
<dbReference type="PIRSF" id="PIRSF000106">
    <property type="entry name" value="ME"/>
    <property type="match status" value="1"/>
</dbReference>
<dbReference type="PRINTS" id="PR00072">
    <property type="entry name" value="MALOXRDTASE"/>
</dbReference>
<dbReference type="SMART" id="SM01274">
    <property type="entry name" value="malic"/>
    <property type="match status" value="1"/>
</dbReference>
<dbReference type="SMART" id="SM00919">
    <property type="entry name" value="Malic_M"/>
    <property type="match status" value="1"/>
</dbReference>
<dbReference type="SUPFAM" id="SSF53223">
    <property type="entry name" value="Aminoacid dehydrogenase-like, N-terminal domain"/>
    <property type="match status" value="1"/>
</dbReference>
<dbReference type="SUPFAM" id="SSF51735">
    <property type="entry name" value="NAD(P)-binding Rossmann-fold domains"/>
    <property type="match status" value="1"/>
</dbReference>
<dbReference type="PROSITE" id="PS00331">
    <property type="entry name" value="MALIC_ENZYMES"/>
    <property type="match status" value="1"/>
</dbReference>
<name>MAO1_ECOL5</name>